<accession>Q5H1Q0</accession>
<keyword id="KW-0131">Cell cycle</keyword>
<keyword id="KW-0132">Cell division</keyword>
<keyword id="KW-0133">Cell shape</keyword>
<keyword id="KW-0961">Cell wall biogenesis/degradation</keyword>
<keyword id="KW-0963">Cytoplasm</keyword>
<keyword id="KW-0326">Glycosidase</keyword>
<keyword id="KW-0378">Hydrolase</keyword>
<keyword id="KW-0573">Peptidoglycan synthesis</keyword>
<keyword id="KW-1185">Reference proteome</keyword>
<name>NAGZ_XANOR</name>
<feature type="chain" id="PRO_0000234930" description="Beta-hexosaminidase">
    <location>
        <begin position="1"/>
        <end position="334"/>
    </location>
</feature>
<feature type="active site" description="Proton donor/acceptor" evidence="1">
    <location>
        <position position="176"/>
    </location>
</feature>
<feature type="active site" description="Nucleophile" evidence="1">
    <location>
        <position position="247"/>
    </location>
</feature>
<feature type="binding site" evidence="1">
    <location>
        <position position="60"/>
    </location>
    <ligand>
        <name>substrate</name>
    </ligand>
</feature>
<feature type="binding site" evidence="1">
    <location>
        <position position="68"/>
    </location>
    <ligand>
        <name>substrate</name>
    </ligand>
</feature>
<feature type="binding site" evidence="1">
    <location>
        <position position="133"/>
    </location>
    <ligand>
        <name>substrate</name>
    </ligand>
</feature>
<feature type="binding site" evidence="1">
    <location>
        <begin position="163"/>
        <end position="164"/>
    </location>
    <ligand>
        <name>substrate</name>
    </ligand>
</feature>
<feature type="site" description="Important for catalytic activity" evidence="1">
    <location>
        <position position="174"/>
    </location>
</feature>
<evidence type="ECO:0000255" key="1">
    <source>
        <dbReference type="HAMAP-Rule" id="MF_00364"/>
    </source>
</evidence>
<evidence type="ECO:0000305" key="2"/>
<proteinExistence type="inferred from homology"/>
<reference key="1">
    <citation type="journal article" date="2005" name="Nucleic Acids Res.">
        <title>The genome sequence of Xanthomonas oryzae pathovar oryzae KACC10331, the bacterial blight pathogen of rice.</title>
        <authorList>
            <person name="Lee B.-M."/>
            <person name="Park Y.-J."/>
            <person name="Park D.-S."/>
            <person name="Kang H.-W."/>
            <person name="Kim J.-G."/>
            <person name="Song E.-S."/>
            <person name="Park I.-C."/>
            <person name="Yoon U.-H."/>
            <person name="Hahn J.-H."/>
            <person name="Koo B.-S."/>
            <person name="Lee G.-B."/>
            <person name="Kim H."/>
            <person name="Park H.-S."/>
            <person name="Yoon K.-O."/>
            <person name="Kim J.-H."/>
            <person name="Jung C.-H."/>
            <person name="Koh N.-H."/>
            <person name="Seo J.-S."/>
            <person name="Go S.-J."/>
        </authorList>
    </citation>
    <scope>NUCLEOTIDE SEQUENCE [LARGE SCALE GENOMIC DNA]</scope>
    <source>
        <strain>KACC10331 / KXO85</strain>
    </source>
</reference>
<protein>
    <recommendedName>
        <fullName evidence="1">Beta-hexosaminidase</fullName>
        <ecNumber evidence="1">3.2.1.52</ecNumber>
    </recommendedName>
    <alternativeName>
        <fullName evidence="1">Beta-N-acetylhexosaminidase</fullName>
    </alternativeName>
    <alternativeName>
        <fullName evidence="1">N-acetyl-beta-glucosaminidase</fullName>
    </alternativeName>
</protein>
<comment type="function">
    <text evidence="1">Plays a role in peptidoglycan recycling by cleaving the terminal beta-1,4-linked N-acetylglucosamine (GlcNAc) from peptide-linked peptidoglycan fragments, giving rise to free GlcNAc, anhydro-N-acetylmuramic acid and anhydro-N-acetylmuramic acid-linked peptides.</text>
</comment>
<comment type="catalytic activity">
    <reaction evidence="1">
        <text>Hydrolysis of terminal non-reducing N-acetyl-D-hexosamine residues in N-acetyl-beta-D-hexosaminides.</text>
        <dbReference type="EC" id="3.2.1.52"/>
    </reaction>
</comment>
<comment type="pathway">
    <text evidence="1">Cell wall biogenesis; peptidoglycan recycling.</text>
</comment>
<comment type="subcellular location">
    <subcellularLocation>
        <location evidence="1">Cytoplasm</location>
    </subcellularLocation>
</comment>
<comment type="similarity">
    <text evidence="1">Belongs to the glycosyl hydrolase 3 family. NagZ subfamily.</text>
</comment>
<comment type="sequence caution" evidence="2">
    <conflict type="erroneous initiation">
        <sequence resource="EMBL-CDS" id="AAW75121"/>
    </conflict>
</comment>
<organism>
    <name type="scientific">Xanthomonas oryzae pv. oryzae (strain KACC10331 / KXO85)</name>
    <dbReference type="NCBI Taxonomy" id="291331"/>
    <lineage>
        <taxon>Bacteria</taxon>
        <taxon>Pseudomonadati</taxon>
        <taxon>Pseudomonadota</taxon>
        <taxon>Gammaproteobacteria</taxon>
        <taxon>Lysobacterales</taxon>
        <taxon>Lysobacteraceae</taxon>
        <taxon>Xanthomonas</taxon>
    </lineage>
</organism>
<dbReference type="EC" id="3.2.1.52" evidence="1"/>
<dbReference type="EMBL" id="AE013598">
    <property type="protein sequence ID" value="AAW75121.1"/>
    <property type="status" value="ALT_INIT"/>
    <property type="molecule type" value="Genomic_DNA"/>
</dbReference>
<dbReference type="SMR" id="Q5H1Q0"/>
<dbReference type="STRING" id="291331.XOO1867"/>
<dbReference type="CAZy" id="GH3">
    <property type="family name" value="Glycoside Hydrolase Family 3"/>
</dbReference>
<dbReference type="KEGG" id="xoo:XOO1867"/>
<dbReference type="PATRIC" id="fig|291331.8.peg.2070"/>
<dbReference type="HOGENOM" id="CLU_008392_0_0_6"/>
<dbReference type="UniPathway" id="UPA00544"/>
<dbReference type="Proteomes" id="UP000006735">
    <property type="component" value="Chromosome"/>
</dbReference>
<dbReference type="GO" id="GO:0005737">
    <property type="term" value="C:cytoplasm"/>
    <property type="evidence" value="ECO:0007669"/>
    <property type="project" value="UniProtKB-SubCell"/>
</dbReference>
<dbReference type="GO" id="GO:0004563">
    <property type="term" value="F:beta-N-acetylhexosaminidase activity"/>
    <property type="evidence" value="ECO:0007669"/>
    <property type="project" value="UniProtKB-UniRule"/>
</dbReference>
<dbReference type="GO" id="GO:0005975">
    <property type="term" value="P:carbohydrate metabolic process"/>
    <property type="evidence" value="ECO:0007669"/>
    <property type="project" value="InterPro"/>
</dbReference>
<dbReference type="GO" id="GO:0051301">
    <property type="term" value="P:cell division"/>
    <property type="evidence" value="ECO:0007669"/>
    <property type="project" value="UniProtKB-KW"/>
</dbReference>
<dbReference type="GO" id="GO:0071555">
    <property type="term" value="P:cell wall organization"/>
    <property type="evidence" value="ECO:0007669"/>
    <property type="project" value="UniProtKB-KW"/>
</dbReference>
<dbReference type="GO" id="GO:0009252">
    <property type="term" value="P:peptidoglycan biosynthetic process"/>
    <property type="evidence" value="ECO:0007669"/>
    <property type="project" value="UniProtKB-KW"/>
</dbReference>
<dbReference type="GO" id="GO:0009254">
    <property type="term" value="P:peptidoglycan turnover"/>
    <property type="evidence" value="ECO:0007669"/>
    <property type="project" value="UniProtKB-UniRule"/>
</dbReference>
<dbReference type="GO" id="GO:0008360">
    <property type="term" value="P:regulation of cell shape"/>
    <property type="evidence" value="ECO:0007669"/>
    <property type="project" value="UniProtKB-KW"/>
</dbReference>
<dbReference type="FunFam" id="3.20.20.300:FF:000001">
    <property type="entry name" value="Beta-hexosaminidase"/>
    <property type="match status" value="1"/>
</dbReference>
<dbReference type="Gene3D" id="3.20.20.300">
    <property type="entry name" value="Glycoside hydrolase, family 3, N-terminal domain"/>
    <property type="match status" value="1"/>
</dbReference>
<dbReference type="HAMAP" id="MF_00364">
    <property type="entry name" value="NagZ"/>
    <property type="match status" value="1"/>
</dbReference>
<dbReference type="InterPro" id="IPR022956">
    <property type="entry name" value="Beta_hexosaminidase_bac"/>
</dbReference>
<dbReference type="InterPro" id="IPR019800">
    <property type="entry name" value="Glyco_hydro_3_AS"/>
</dbReference>
<dbReference type="InterPro" id="IPR001764">
    <property type="entry name" value="Glyco_hydro_3_N"/>
</dbReference>
<dbReference type="InterPro" id="IPR036962">
    <property type="entry name" value="Glyco_hydro_3_N_sf"/>
</dbReference>
<dbReference type="InterPro" id="IPR017853">
    <property type="entry name" value="Glycoside_hydrolase_SF"/>
</dbReference>
<dbReference type="InterPro" id="IPR050226">
    <property type="entry name" value="NagZ_Beta-hexosaminidase"/>
</dbReference>
<dbReference type="NCBIfam" id="NF003740">
    <property type="entry name" value="PRK05337.1"/>
    <property type="match status" value="1"/>
</dbReference>
<dbReference type="PANTHER" id="PTHR30480:SF13">
    <property type="entry name" value="BETA-HEXOSAMINIDASE"/>
    <property type="match status" value="1"/>
</dbReference>
<dbReference type="PANTHER" id="PTHR30480">
    <property type="entry name" value="BETA-HEXOSAMINIDASE-RELATED"/>
    <property type="match status" value="1"/>
</dbReference>
<dbReference type="Pfam" id="PF00933">
    <property type="entry name" value="Glyco_hydro_3"/>
    <property type="match status" value="1"/>
</dbReference>
<dbReference type="SUPFAM" id="SSF51445">
    <property type="entry name" value="(Trans)glycosidases"/>
    <property type="match status" value="1"/>
</dbReference>
<dbReference type="PROSITE" id="PS00775">
    <property type="entry name" value="GLYCOSYL_HYDROL_F3"/>
    <property type="match status" value="1"/>
</dbReference>
<gene>
    <name evidence="1" type="primary">nagZ</name>
    <name type="ordered locus">XOO1867</name>
</gene>
<sequence>MLLIGVAGTELSAQERDWLQHDAVAGVVLFKRNFGSRSQVAELSAAIRAAAPRPVLICVDQEGGRVQRFREGFSALAPLQSFGAQYAQAPEAALAAARAHAQLMASEVRASGVDLSFAPVVDLGRGNRAIGDRAFSDDPQIVATFTRAYVQALHGAGMAATLKHFPGHGTVLEDTHVDHASDPRPLEALQAEDLVPFVAGIEAGADAVMMAHVVYPQVAPEPAGYSQRWIEQILRGQMGFRGVVFSDDIGMAASLSAGGVAGRVHAHLDAGCDVVLVCHPELVAESLQAVQGRRLNTAALIGLIGRGALGWDGLLAGTDASFTAPLSAHFGTTA</sequence>